<feature type="chain" id="PRO_0000303949" description="Ribosomal lysine N-methyltransferase set10">
    <location>
        <begin position="1"/>
        <end position="547"/>
    </location>
</feature>
<feature type="domain" description="SET" evidence="1">
    <location>
        <begin position="17"/>
        <end position="235"/>
    </location>
</feature>
<feature type="binding site" evidence="1">
    <location>
        <position position="234"/>
    </location>
    <ligand>
        <name>S-adenosyl-L-methionine</name>
        <dbReference type="ChEBI" id="CHEBI:59789"/>
    </ligand>
</feature>
<gene>
    <name type="primary">set10</name>
    <name type="ORF">SPBC1709.13c</name>
</gene>
<dbReference type="EC" id="2.1.1.-"/>
<dbReference type="EMBL" id="CU329671">
    <property type="protein sequence ID" value="CAA21252.1"/>
    <property type="molecule type" value="Genomic_DNA"/>
</dbReference>
<dbReference type="PIR" id="T39641">
    <property type="entry name" value="T39641"/>
</dbReference>
<dbReference type="RefSeq" id="NP_595446.1">
    <property type="nucleotide sequence ID" value="NM_001021355.2"/>
</dbReference>
<dbReference type="SMR" id="O74738"/>
<dbReference type="BioGRID" id="276370">
    <property type="interactions" value="19"/>
</dbReference>
<dbReference type="FunCoup" id="O74738">
    <property type="interactions" value="482"/>
</dbReference>
<dbReference type="STRING" id="284812.O74738"/>
<dbReference type="PaxDb" id="4896-SPBC1709.13c.1"/>
<dbReference type="EnsemblFungi" id="SPBC1709.13c.1">
    <property type="protein sequence ID" value="SPBC1709.13c.1:pep"/>
    <property type="gene ID" value="SPBC1709.13c"/>
</dbReference>
<dbReference type="GeneID" id="2539820"/>
<dbReference type="KEGG" id="spo:2539820"/>
<dbReference type="PomBase" id="SPBC1709.13c">
    <property type="gene designation" value="set10"/>
</dbReference>
<dbReference type="VEuPathDB" id="FungiDB:SPBC1709.13c"/>
<dbReference type="eggNOG" id="KOG1337">
    <property type="taxonomic scope" value="Eukaryota"/>
</dbReference>
<dbReference type="HOGENOM" id="CLU_030667_1_0_1"/>
<dbReference type="InParanoid" id="O74738"/>
<dbReference type="OMA" id="CPFEYAI"/>
<dbReference type="PhylomeDB" id="O74738"/>
<dbReference type="PRO" id="PR:O74738"/>
<dbReference type="Proteomes" id="UP000002485">
    <property type="component" value="Chromosome II"/>
</dbReference>
<dbReference type="GO" id="GO:0005829">
    <property type="term" value="C:cytosol"/>
    <property type="evidence" value="ECO:0007005"/>
    <property type="project" value="PomBase"/>
</dbReference>
<dbReference type="GO" id="GO:0005634">
    <property type="term" value="C:nucleus"/>
    <property type="evidence" value="ECO:0007005"/>
    <property type="project" value="PomBase"/>
</dbReference>
<dbReference type="GO" id="GO:0016279">
    <property type="term" value="F:protein-lysine N-methyltransferase activity"/>
    <property type="evidence" value="ECO:0000315"/>
    <property type="project" value="PomBase"/>
</dbReference>
<dbReference type="GO" id="GO:0032259">
    <property type="term" value="P:methylation"/>
    <property type="evidence" value="ECO:0007669"/>
    <property type="project" value="UniProtKB-KW"/>
</dbReference>
<dbReference type="GO" id="GO:0042254">
    <property type="term" value="P:ribosome biogenesis"/>
    <property type="evidence" value="ECO:0000303"/>
    <property type="project" value="PomBase"/>
</dbReference>
<dbReference type="CDD" id="cd19180">
    <property type="entry name" value="SET_SpSET10-like"/>
    <property type="match status" value="1"/>
</dbReference>
<dbReference type="Gene3D" id="3.90.1420.10">
    <property type="entry name" value="Rubisco LSMT, substrate-binding domain"/>
    <property type="match status" value="1"/>
</dbReference>
<dbReference type="Gene3D" id="3.90.1410.10">
    <property type="entry name" value="set domain protein methyltransferase, domain 1"/>
    <property type="match status" value="1"/>
</dbReference>
<dbReference type="InterPro" id="IPR011219">
    <property type="entry name" value="Rubisco-cyt_methylase_MET"/>
</dbReference>
<dbReference type="InterPro" id="IPR036464">
    <property type="entry name" value="Rubisco_LSMT_subst-bd_sf"/>
</dbReference>
<dbReference type="InterPro" id="IPR044432">
    <property type="entry name" value="Set10/Efm1_SET"/>
</dbReference>
<dbReference type="InterPro" id="IPR001214">
    <property type="entry name" value="SET_dom"/>
</dbReference>
<dbReference type="InterPro" id="IPR046341">
    <property type="entry name" value="SET_dom_sf"/>
</dbReference>
<dbReference type="InterPro" id="IPR050600">
    <property type="entry name" value="SETD3_SETD6_MTase"/>
</dbReference>
<dbReference type="PANTHER" id="PTHR13271:SF147">
    <property type="entry name" value="PROTEIN-LYSINE N-METHYLTRANSFERASE EFM1-RELATED"/>
    <property type="match status" value="1"/>
</dbReference>
<dbReference type="PANTHER" id="PTHR13271">
    <property type="entry name" value="UNCHARACTERIZED PUTATIVE METHYLTRANSFERASE"/>
    <property type="match status" value="1"/>
</dbReference>
<dbReference type="PIRSF" id="PIRSF026986">
    <property type="entry name" value="MET_SET"/>
    <property type="match status" value="1"/>
</dbReference>
<dbReference type="SUPFAM" id="SSF82199">
    <property type="entry name" value="SET domain"/>
    <property type="match status" value="1"/>
</dbReference>
<dbReference type="PROSITE" id="PS50280">
    <property type="entry name" value="SET"/>
    <property type="match status" value="1"/>
</dbReference>
<accession>O74738</accession>
<protein>
    <recommendedName>
        <fullName>Ribosomal lysine N-methyltransferase set10</fullName>
        <ecNumber>2.1.1.-</ecNumber>
    </recommendedName>
    <alternativeName>
        <fullName>SET domain-containing protein 10</fullName>
    </alternativeName>
</protein>
<keyword id="KW-0963">Cytoplasm</keyword>
<keyword id="KW-0489">Methyltransferase</keyword>
<keyword id="KW-0539">Nucleus</keyword>
<keyword id="KW-1185">Reference proteome</keyword>
<keyword id="KW-0949">S-adenosyl-L-methionine</keyword>
<keyword id="KW-0808">Transferase</keyword>
<reference key="1">
    <citation type="journal article" date="2002" name="Nature">
        <title>The genome sequence of Schizosaccharomyces pombe.</title>
        <authorList>
            <person name="Wood V."/>
            <person name="Gwilliam R."/>
            <person name="Rajandream M.A."/>
            <person name="Lyne M.H."/>
            <person name="Lyne R."/>
            <person name="Stewart A."/>
            <person name="Sgouros J.G."/>
            <person name="Peat N."/>
            <person name="Hayles J."/>
            <person name="Baker S.G."/>
            <person name="Basham D."/>
            <person name="Bowman S."/>
            <person name="Brooks K."/>
            <person name="Brown D."/>
            <person name="Brown S."/>
            <person name="Chillingworth T."/>
            <person name="Churcher C.M."/>
            <person name="Collins M."/>
            <person name="Connor R."/>
            <person name="Cronin A."/>
            <person name="Davis P."/>
            <person name="Feltwell T."/>
            <person name="Fraser A."/>
            <person name="Gentles S."/>
            <person name="Goble A."/>
            <person name="Hamlin N."/>
            <person name="Harris D.E."/>
            <person name="Hidalgo J."/>
            <person name="Hodgson G."/>
            <person name="Holroyd S."/>
            <person name="Hornsby T."/>
            <person name="Howarth S."/>
            <person name="Huckle E.J."/>
            <person name="Hunt S."/>
            <person name="Jagels K."/>
            <person name="James K.D."/>
            <person name="Jones L."/>
            <person name="Jones M."/>
            <person name="Leather S."/>
            <person name="McDonald S."/>
            <person name="McLean J."/>
            <person name="Mooney P."/>
            <person name="Moule S."/>
            <person name="Mungall K.L."/>
            <person name="Murphy L.D."/>
            <person name="Niblett D."/>
            <person name="Odell C."/>
            <person name="Oliver K."/>
            <person name="O'Neil S."/>
            <person name="Pearson D."/>
            <person name="Quail M.A."/>
            <person name="Rabbinowitsch E."/>
            <person name="Rutherford K.M."/>
            <person name="Rutter S."/>
            <person name="Saunders D."/>
            <person name="Seeger K."/>
            <person name="Sharp S."/>
            <person name="Skelton J."/>
            <person name="Simmonds M.N."/>
            <person name="Squares R."/>
            <person name="Squares S."/>
            <person name="Stevens K."/>
            <person name="Taylor K."/>
            <person name="Taylor R.G."/>
            <person name="Tivey A."/>
            <person name="Walsh S.V."/>
            <person name="Warren T."/>
            <person name="Whitehead S."/>
            <person name="Woodward J.R."/>
            <person name="Volckaert G."/>
            <person name="Aert R."/>
            <person name="Robben J."/>
            <person name="Grymonprez B."/>
            <person name="Weltjens I."/>
            <person name="Vanstreels E."/>
            <person name="Rieger M."/>
            <person name="Schaefer M."/>
            <person name="Mueller-Auer S."/>
            <person name="Gabel C."/>
            <person name="Fuchs M."/>
            <person name="Duesterhoeft A."/>
            <person name="Fritzc C."/>
            <person name="Holzer E."/>
            <person name="Moestl D."/>
            <person name="Hilbert H."/>
            <person name="Borzym K."/>
            <person name="Langer I."/>
            <person name="Beck A."/>
            <person name="Lehrach H."/>
            <person name="Reinhardt R."/>
            <person name="Pohl T.M."/>
            <person name="Eger P."/>
            <person name="Zimmermann W."/>
            <person name="Wedler H."/>
            <person name="Wambutt R."/>
            <person name="Purnelle B."/>
            <person name="Goffeau A."/>
            <person name="Cadieu E."/>
            <person name="Dreano S."/>
            <person name="Gloux S."/>
            <person name="Lelaure V."/>
            <person name="Mottier S."/>
            <person name="Galibert F."/>
            <person name="Aves S.J."/>
            <person name="Xiang Z."/>
            <person name="Hunt C."/>
            <person name="Moore K."/>
            <person name="Hurst S.M."/>
            <person name="Lucas M."/>
            <person name="Rochet M."/>
            <person name="Gaillardin C."/>
            <person name="Tallada V.A."/>
            <person name="Garzon A."/>
            <person name="Thode G."/>
            <person name="Daga R.R."/>
            <person name="Cruzado L."/>
            <person name="Jimenez J."/>
            <person name="Sanchez M."/>
            <person name="del Rey F."/>
            <person name="Benito J."/>
            <person name="Dominguez A."/>
            <person name="Revuelta J.L."/>
            <person name="Moreno S."/>
            <person name="Armstrong J."/>
            <person name="Forsburg S.L."/>
            <person name="Cerutti L."/>
            <person name="Lowe T."/>
            <person name="McCombie W.R."/>
            <person name="Paulsen I."/>
            <person name="Potashkin J."/>
            <person name="Shpakovski G.V."/>
            <person name="Ussery D."/>
            <person name="Barrell B.G."/>
            <person name="Nurse P."/>
        </authorList>
    </citation>
    <scope>NUCLEOTIDE SEQUENCE [LARGE SCALE GENOMIC DNA]</scope>
    <source>
        <strain>972 / ATCC 24843</strain>
    </source>
</reference>
<reference key="2">
    <citation type="journal article" date="2006" name="Nat. Biotechnol.">
        <title>ORFeome cloning and global analysis of protein localization in the fission yeast Schizosaccharomyces pombe.</title>
        <authorList>
            <person name="Matsuyama A."/>
            <person name="Arai R."/>
            <person name="Yashiroda Y."/>
            <person name="Shirai A."/>
            <person name="Kamata A."/>
            <person name="Sekido S."/>
            <person name="Kobayashi Y."/>
            <person name="Hashimoto A."/>
            <person name="Hamamoto M."/>
            <person name="Hiraoka Y."/>
            <person name="Horinouchi S."/>
            <person name="Yoshida M."/>
        </authorList>
    </citation>
    <scope>SUBCELLULAR LOCATION [LARGE SCALE ANALYSIS]</scope>
</reference>
<reference key="3">
    <citation type="journal article" date="2008" name="J. Biol. Chem.">
        <title>Global analysis of gel mobility of proteins and its use in target identification.</title>
        <authorList>
            <person name="Shirai A."/>
            <person name="Matsuyama A."/>
            <person name="Yashiroda Y."/>
            <person name="Hashimoto A."/>
            <person name="Kawamura Y."/>
            <person name="Arai R."/>
            <person name="Komatsu Y."/>
            <person name="Horinouchi S."/>
            <person name="Yoshida M."/>
        </authorList>
    </citation>
    <scope>FUNCTION</scope>
</reference>
<evidence type="ECO:0000255" key="1">
    <source>
        <dbReference type="PROSITE-ProRule" id="PRU00190"/>
    </source>
</evidence>
<evidence type="ECO:0000269" key="2">
    <source>
    </source>
</evidence>
<evidence type="ECO:0000269" key="3">
    <source>
    </source>
</evidence>
<evidence type="ECO:0000305" key="4"/>
<proteinExistence type="inferred from homology"/>
<sequence>MEKLLHEALQNGCKLHKSVEFIQSRDDNACFGSYIAVAQNDIAPDQLLISCPFEYAITYNKAKEELKKLNPNFESCNPHITLCTFLALESLKGIQSKWYGYIEYLPKTFNTPLYFNENDNAFLISTNAYSAAQERLHIWKHEYQEALSLHPSPTERFTFDLYIWSATVFSSRCFSSNLIYKDSESTPILLPLIDSLNHKPKQPILWNSDFQDEKSVQLISQELVAKGNQLFNNYGPKGNEELLMGYGFCLPDNPFDTVTLKVAIHPDLPHKDQKAAILENDCQFQLSNLVFFLPKSPDKEIFQKILQCLAVVTASSLELRKLTAHLLTGDLASYVPSLRGQIKSLEVLLMYIDSRADLLLKSNPQVSPTSERQVWAKIYRDSQINILQDSITYVKNYMEESLQKTYKPLPNLLQYLILNSISIFLLQHPLFAPLSHAIESLYGSTDAEALVATDEQDILMILICVYCLSISEKLPFSISMLVEGYPAVANPEGVEVFEILDEMFFQQFTNVFGESKHFNKENVSWALQLVNDESLDFSGFTFIIAHN</sequence>
<name>SET10_SCHPO</name>
<comment type="function">
    <text evidence="3">S-adenosyl-L-methionine-dependent protein-lysine N-methyltransferase that methylates ribosomal protein L23 (rpl23a and rpl23b).</text>
</comment>
<comment type="subcellular location">
    <subcellularLocation>
        <location evidence="2">Cytoplasm</location>
    </subcellularLocation>
    <subcellularLocation>
        <location evidence="2">Nucleus</location>
    </subcellularLocation>
</comment>
<comment type="similarity">
    <text evidence="1 4">Belongs to the class V-like SAM-binding methyltransferase superfamily. RKM1 family.</text>
</comment>
<organism>
    <name type="scientific">Schizosaccharomyces pombe (strain 972 / ATCC 24843)</name>
    <name type="common">Fission yeast</name>
    <dbReference type="NCBI Taxonomy" id="284812"/>
    <lineage>
        <taxon>Eukaryota</taxon>
        <taxon>Fungi</taxon>
        <taxon>Dikarya</taxon>
        <taxon>Ascomycota</taxon>
        <taxon>Taphrinomycotina</taxon>
        <taxon>Schizosaccharomycetes</taxon>
        <taxon>Schizosaccharomycetales</taxon>
        <taxon>Schizosaccharomycetaceae</taxon>
        <taxon>Schizosaccharomyces</taxon>
    </lineage>
</organism>